<sequence length="504" mass="55623">MSEIVTYEDALKDFEPIIGLEVHVELSTQTKLFSSAPNIAGPLASCASQGPNTLVTPVCLGLPGSLPTVNERAVDYGIALGLALGCSIADELIFARKNYFYPDLPKNYQISQFDSPLAYDGKLEVETESGDVFFVEIERAHLEEDAGKLAHKSSTGRIQGAQYSLIDYNRSGVPLVEIVSRPVFADRCAPQVARAFVELIREIVLSLGVSNARLERGNIRCDANVSLRPRGLGAGILPNRTETKNLNSLRSIERAIRYEIQRQATLISSGELVRQETRHWREDRGITLSGRVKADSHEYRYFPEPDLLPIPIPSDKVEAIRLSMPEHPLALRRRLKAEWKFSDLQFRDVLNSSVLKQVDETVRAGATPDGAKKWWTGEITRIASQRRCNASDLISPEAVAEIELLISKGILNDSLARKVLAAVIDESLSVQQAIEKYDLSLTESASVERVLEKVLSENQEVVQKVISGKTQAVGVLVGSCMKTLGGKADASKLRQTILNRLLPR</sequence>
<protein>
    <recommendedName>
        <fullName evidence="1">Aspartyl/glutamyl-tRNA(Asn/Gln) amidotransferase subunit B</fullName>
        <shortName evidence="1">Asp/Glu-ADT subunit B</shortName>
        <ecNumber evidence="1">6.3.5.-</ecNumber>
    </recommendedName>
</protein>
<evidence type="ECO:0000255" key="1">
    <source>
        <dbReference type="HAMAP-Rule" id="MF_00121"/>
    </source>
</evidence>
<organism>
    <name type="scientific">Tropheryma whipplei (strain TW08/27)</name>
    <name type="common">Whipple's bacillus</name>
    <dbReference type="NCBI Taxonomy" id="218496"/>
    <lineage>
        <taxon>Bacteria</taxon>
        <taxon>Bacillati</taxon>
        <taxon>Actinomycetota</taxon>
        <taxon>Actinomycetes</taxon>
        <taxon>Micrococcales</taxon>
        <taxon>Tropherymataceae</taxon>
        <taxon>Tropheryma</taxon>
    </lineage>
</organism>
<name>GATB_TROW8</name>
<dbReference type="EC" id="6.3.5.-" evidence="1"/>
<dbReference type="EMBL" id="BX251411">
    <property type="protein sequence ID" value="CAD67029.1"/>
    <property type="molecule type" value="Genomic_DNA"/>
</dbReference>
<dbReference type="RefSeq" id="WP_011096309.1">
    <property type="nucleotide sequence ID" value="NC_004551.1"/>
</dbReference>
<dbReference type="SMR" id="Q83HX1"/>
<dbReference type="GeneID" id="67388130"/>
<dbReference type="KEGG" id="tws:TW357"/>
<dbReference type="HOGENOM" id="CLU_019240_0_1_11"/>
<dbReference type="GO" id="GO:0050566">
    <property type="term" value="F:asparaginyl-tRNA synthase (glutamine-hydrolyzing) activity"/>
    <property type="evidence" value="ECO:0007669"/>
    <property type="project" value="RHEA"/>
</dbReference>
<dbReference type="GO" id="GO:0005524">
    <property type="term" value="F:ATP binding"/>
    <property type="evidence" value="ECO:0007669"/>
    <property type="project" value="UniProtKB-KW"/>
</dbReference>
<dbReference type="GO" id="GO:0050567">
    <property type="term" value="F:glutaminyl-tRNA synthase (glutamine-hydrolyzing) activity"/>
    <property type="evidence" value="ECO:0007669"/>
    <property type="project" value="UniProtKB-UniRule"/>
</dbReference>
<dbReference type="GO" id="GO:0070681">
    <property type="term" value="P:glutaminyl-tRNAGln biosynthesis via transamidation"/>
    <property type="evidence" value="ECO:0007669"/>
    <property type="project" value="TreeGrafter"/>
</dbReference>
<dbReference type="GO" id="GO:0006412">
    <property type="term" value="P:translation"/>
    <property type="evidence" value="ECO:0007669"/>
    <property type="project" value="UniProtKB-UniRule"/>
</dbReference>
<dbReference type="Gene3D" id="1.10.10.410">
    <property type="match status" value="1"/>
</dbReference>
<dbReference type="HAMAP" id="MF_00121">
    <property type="entry name" value="GatB"/>
    <property type="match status" value="1"/>
</dbReference>
<dbReference type="InterPro" id="IPR017959">
    <property type="entry name" value="Asn/Gln-tRNA_amidoTrfase_suB/E"/>
</dbReference>
<dbReference type="InterPro" id="IPR006075">
    <property type="entry name" value="Asn/Gln-tRNA_Trfase_suB/E_cat"/>
</dbReference>
<dbReference type="InterPro" id="IPR018027">
    <property type="entry name" value="Asn/Gln_amidotransferase"/>
</dbReference>
<dbReference type="InterPro" id="IPR003789">
    <property type="entry name" value="Asn/Gln_tRNA_amidoTrase-B-like"/>
</dbReference>
<dbReference type="InterPro" id="IPR004413">
    <property type="entry name" value="GatB"/>
</dbReference>
<dbReference type="InterPro" id="IPR023168">
    <property type="entry name" value="GatB_Yqey_C_2"/>
</dbReference>
<dbReference type="InterPro" id="IPR017958">
    <property type="entry name" value="Gln-tRNA_amidoTrfase_suB_CS"/>
</dbReference>
<dbReference type="InterPro" id="IPR014746">
    <property type="entry name" value="Gln_synth/guanido_kin_cat_dom"/>
</dbReference>
<dbReference type="NCBIfam" id="TIGR00133">
    <property type="entry name" value="gatB"/>
    <property type="match status" value="1"/>
</dbReference>
<dbReference type="NCBIfam" id="NF004012">
    <property type="entry name" value="PRK05477.1-2"/>
    <property type="match status" value="1"/>
</dbReference>
<dbReference type="NCBIfam" id="NF004013">
    <property type="entry name" value="PRK05477.1-3"/>
    <property type="match status" value="1"/>
</dbReference>
<dbReference type="NCBIfam" id="NF004014">
    <property type="entry name" value="PRK05477.1-4"/>
    <property type="match status" value="1"/>
</dbReference>
<dbReference type="PANTHER" id="PTHR11659">
    <property type="entry name" value="GLUTAMYL-TRNA GLN AMIDOTRANSFERASE SUBUNIT B MITOCHONDRIAL AND PROKARYOTIC PET112-RELATED"/>
    <property type="match status" value="1"/>
</dbReference>
<dbReference type="PANTHER" id="PTHR11659:SF0">
    <property type="entry name" value="GLUTAMYL-TRNA(GLN) AMIDOTRANSFERASE SUBUNIT B, MITOCHONDRIAL"/>
    <property type="match status" value="1"/>
</dbReference>
<dbReference type="Pfam" id="PF02934">
    <property type="entry name" value="GatB_N"/>
    <property type="match status" value="1"/>
</dbReference>
<dbReference type="Pfam" id="PF02637">
    <property type="entry name" value="GatB_Yqey"/>
    <property type="match status" value="1"/>
</dbReference>
<dbReference type="SMART" id="SM00845">
    <property type="entry name" value="GatB_Yqey"/>
    <property type="match status" value="1"/>
</dbReference>
<dbReference type="SUPFAM" id="SSF89095">
    <property type="entry name" value="GatB/YqeY motif"/>
    <property type="match status" value="1"/>
</dbReference>
<dbReference type="SUPFAM" id="SSF55931">
    <property type="entry name" value="Glutamine synthetase/guanido kinase"/>
    <property type="match status" value="1"/>
</dbReference>
<dbReference type="PROSITE" id="PS01234">
    <property type="entry name" value="GATB"/>
    <property type="match status" value="1"/>
</dbReference>
<gene>
    <name evidence="1" type="primary">gatB</name>
    <name type="ordered locus">TW357</name>
</gene>
<accession>Q83HX1</accession>
<proteinExistence type="inferred from homology"/>
<keyword id="KW-0067">ATP-binding</keyword>
<keyword id="KW-0436">Ligase</keyword>
<keyword id="KW-0547">Nucleotide-binding</keyword>
<keyword id="KW-0648">Protein biosynthesis</keyword>
<reference key="1">
    <citation type="journal article" date="2003" name="Lancet">
        <title>Sequencing and analysis of the genome of the Whipple's disease bacterium Tropheryma whipplei.</title>
        <authorList>
            <person name="Bentley S.D."/>
            <person name="Maiwald M."/>
            <person name="Murphy L.D."/>
            <person name="Pallen M.J."/>
            <person name="Yeats C.A."/>
            <person name="Dover L.G."/>
            <person name="Norbertczak H.T."/>
            <person name="Besra G.S."/>
            <person name="Quail M.A."/>
            <person name="Harris D.E."/>
            <person name="von Herbay A."/>
            <person name="Goble A."/>
            <person name="Rutter S."/>
            <person name="Squares R."/>
            <person name="Squares S."/>
            <person name="Barrell B.G."/>
            <person name="Parkhill J."/>
            <person name="Relman D.A."/>
        </authorList>
    </citation>
    <scope>NUCLEOTIDE SEQUENCE [LARGE SCALE GENOMIC DNA]</scope>
    <source>
        <strain>TW08/27</strain>
    </source>
</reference>
<feature type="chain" id="PRO_0000148862" description="Aspartyl/glutamyl-tRNA(Asn/Gln) amidotransferase subunit B">
    <location>
        <begin position="1"/>
        <end position="504"/>
    </location>
</feature>
<comment type="function">
    <text evidence="1">Allows the formation of correctly charged Asn-tRNA(Asn) or Gln-tRNA(Gln) through the transamidation of misacylated Asp-tRNA(Asn) or Glu-tRNA(Gln) in organisms which lack either or both of asparaginyl-tRNA or glutaminyl-tRNA synthetases. The reaction takes place in the presence of glutamine and ATP through an activated phospho-Asp-tRNA(Asn) or phospho-Glu-tRNA(Gln).</text>
</comment>
<comment type="catalytic activity">
    <reaction evidence="1">
        <text>L-glutamyl-tRNA(Gln) + L-glutamine + ATP + H2O = L-glutaminyl-tRNA(Gln) + L-glutamate + ADP + phosphate + H(+)</text>
        <dbReference type="Rhea" id="RHEA:17521"/>
        <dbReference type="Rhea" id="RHEA-COMP:9681"/>
        <dbReference type="Rhea" id="RHEA-COMP:9684"/>
        <dbReference type="ChEBI" id="CHEBI:15377"/>
        <dbReference type="ChEBI" id="CHEBI:15378"/>
        <dbReference type="ChEBI" id="CHEBI:29985"/>
        <dbReference type="ChEBI" id="CHEBI:30616"/>
        <dbReference type="ChEBI" id="CHEBI:43474"/>
        <dbReference type="ChEBI" id="CHEBI:58359"/>
        <dbReference type="ChEBI" id="CHEBI:78520"/>
        <dbReference type="ChEBI" id="CHEBI:78521"/>
        <dbReference type="ChEBI" id="CHEBI:456216"/>
    </reaction>
</comment>
<comment type="catalytic activity">
    <reaction evidence="1">
        <text>L-aspartyl-tRNA(Asn) + L-glutamine + ATP + H2O = L-asparaginyl-tRNA(Asn) + L-glutamate + ADP + phosphate + 2 H(+)</text>
        <dbReference type="Rhea" id="RHEA:14513"/>
        <dbReference type="Rhea" id="RHEA-COMP:9674"/>
        <dbReference type="Rhea" id="RHEA-COMP:9677"/>
        <dbReference type="ChEBI" id="CHEBI:15377"/>
        <dbReference type="ChEBI" id="CHEBI:15378"/>
        <dbReference type="ChEBI" id="CHEBI:29985"/>
        <dbReference type="ChEBI" id="CHEBI:30616"/>
        <dbReference type="ChEBI" id="CHEBI:43474"/>
        <dbReference type="ChEBI" id="CHEBI:58359"/>
        <dbReference type="ChEBI" id="CHEBI:78515"/>
        <dbReference type="ChEBI" id="CHEBI:78516"/>
        <dbReference type="ChEBI" id="CHEBI:456216"/>
    </reaction>
</comment>
<comment type="subunit">
    <text evidence="1">Heterotrimer of A, B and C subunits.</text>
</comment>
<comment type="similarity">
    <text evidence="1">Belongs to the GatB/GatE family. GatB subfamily.</text>
</comment>